<dbReference type="EMBL" id="U18374">
    <property type="protein sequence ID" value="AAC52205.1"/>
    <property type="molecule type" value="mRNA"/>
</dbReference>
<dbReference type="PIR" id="A56918">
    <property type="entry name" value="A56918"/>
</dbReference>
<dbReference type="RefSeq" id="NP_068513.1">
    <property type="nucleotide sequence ID" value="NM_021745.1"/>
</dbReference>
<dbReference type="PDB" id="1OSV">
    <property type="method" value="X-ray"/>
    <property type="resolution" value="2.50 A"/>
    <property type="chains" value="A/B=241-469"/>
</dbReference>
<dbReference type="PDB" id="1OT7">
    <property type="method" value="X-ray"/>
    <property type="resolution" value="2.90 A"/>
    <property type="chains" value="A/B=240-468"/>
</dbReference>
<dbReference type="PDBsum" id="1OSV"/>
<dbReference type="PDBsum" id="1OT7"/>
<dbReference type="SMR" id="Q62735"/>
<dbReference type="FunCoup" id="Q62735">
    <property type="interactions" value="63"/>
</dbReference>
<dbReference type="IntAct" id="Q62735">
    <property type="interactions" value="1"/>
</dbReference>
<dbReference type="STRING" id="10116.ENSRNOP00000073765"/>
<dbReference type="ChEMBL" id="CHEMBL4105917"/>
<dbReference type="PhosphoSitePlus" id="Q62735"/>
<dbReference type="PaxDb" id="10116-ENSRNOP00000009910"/>
<dbReference type="GeneID" id="60351"/>
<dbReference type="KEGG" id="rno:60351"/>
<dbReference type="UCSC" id="RGD:628831">
    <property type="organism name" value="rat"/>
</dbReference>
<dbReference type="AGR" id="RGD:628831"/>
<dbReference type="CTD" id="9971"/>
<dbReference type="RGD" id="628831">
    <property type="gene designation" value="Nr1h4"/>
</dbReference>
<dbReference type="VEuPathDB" id="HostDB:ENSRNOG00000007197"/>
<dbReference type="eggNOG" id="KOG3575">
    <property type="taxonomic scope" value="Eukaryota"/>
</dbReference>
<dbReference type="HOGENOM" id="CLU_007368_12_3_1"/>
<dbReference type="InParanoid" id="Q62735"/>
<dbReference type="OrthoDB" id="5837785at2759"/>
<dbReference type="Reactome" id="R-RNO-159418">
    <property type="pathway name" value="Recycling of bile acids and salts"/>
</dbReference>
<dbReference type="Reactome" id="R-RNO-192105">
    <property type="pathway name" value="Synthesis of bile acids and bile salts"/>
</dbReference>
<dbReference type="Reactome" id="R-RNO-193368">
    <property type="pathway name" value="Synthesis of bile acids and bile salts via 7alpha-hydroxycholesterol"/>
</dbReference>
<dbReference type="Reactome" id="R-RNO-193807">
    <property type="pathway name" value="Synthesis of bile acids and bile salts via 27-hydroxycholesterol"/>
</dbReference>
<dbReference type="Reactome" id="R-RNO-211976">
    <property type="pathway name" value="Endogenous sterols"/>
</dbReference>
<dbReference type="Reactome" id="R-RNO-383280">
    <property type="pathway name" value="Nuclear Receptor transcription pathway"/>
</dbReference>
<dbReference type="Reactome" id="R-RNO-4090294">
    <property type="pathway name" value="SUMOylation of intracellular receptors"/>
</dbReference>
<dbReference type="EvolutionaryTrace" id="Q62735"/>
<dbReference type="PRO" id="PR:Q62735"/>
<dbReference type="Proteomes" id="UP000002494">
    <property type="component" value="Chromosome 7"/>
</dbReference>
<dbReference type="Bgee" id="ENSRNOG00000007197">
    <property type="expression patterns" value="Expressed in liver and 10 other cell types or tissues"/>
</dbReference>
<dbReference type="ExpressionAtlas" id="Q62735">
    <property type="expression patterns" value="baseline and differential"/>
</dbReference>
<dbReference type="GO" id="GO:0000791">
    <property type="term" value="C:euchromatin"/>
    <property type="evidence" value="ECO:0000266"/>
    <property type="project" value="RGD"/>
</dbReference>
<dbReference type="GO" id="GO:0005634">
    <property type="term" value="C:nucleus"/>
    <property type="evidence" value="ECO:0000318"/>
    <property type="project" value="GO_Central"/>
</dbReference>
<dbReference type="GO" id="GO:0043235">
    <property type="term" value="C:receptor complex"/>
    <property type="evidence" value="ECO:0000314"/>
    <property type="project" value="UniProtKB"/>
</dbReference>
<dbReference type="GO" id="GO:0090575">
    <property type="term" value="C:RNA polymerase II transcription regulator complex"/>
    <property type="evidence" value="ECO:0000318"/>
    <property type="project" value="GO_Central"/>
</dbReference>
<dbReference type="GO" id="GO:0032052">
    <property type="term" value="F:bile acid binding"/>
    <property type="evidence" value="ECO:0000314"/>
    <property type="project" value="RGD"/>
</dbReference>
<dbReference type="GO" id="GO:0038186">
    <property type="term" value="F:bile acid nuclear receptor activity"/>
    <property type="evidence" value="ECO:0000314"/>
    <property type="project" value="UniProtKB"/>
</dbReference>
<dbReference type="GO" id="GO:1902122">
    <property type="term" value="F:chenodeoxycholic acid binding"/>
    <property type="evidence" value="ECO:0000314"/>
    <property type="project" value="UniProtKB"/>
</dbReference>
<dbReference type="GO" id="GO:0003677">
    <property type="term" value="F:DNA binding"/>
    <property type="evidence" value="ECO:0000314"/>
    <property type="project" value="RGD"/>
</dbReference>
<dbReference type="GO" id="GO:0001228">
    <property type="term" value="F:DNA-binding transcription activator activity, RNA polymerase II-specific"/>
    <property type="evidence" value="ECO:0000314"/>
    <property type="project" value="NTNU_SB"/>
</dbReference>
<dbReference type="GO" id="GO:0003700">
    <property type="term" value="F:DNA-binding transcription factor activity"/>
    <property type="evidence" value="ECO:0000266"/>
    <property type="project" value="RGD"/>
</dbReference>
<dbReference type="GO" id="GO:0000981">
    <property type="term" value="F:DNA-binding transcription factor activity, RNA polymerase II-specific"/>
    <property type="evidence" value="ECO:0000266"/>
    <property type="project" value="RGD"/>
</dbReference>
<dbReference type="GO" id="GO:0004879">
    <property type="term" value="F:nuclear receptor activity"/>
    <property type="evidence" value="ECO:0000314"/>
    <property type="project" value="UniProtKB"/>
</dbReference>
<dbReference type="GO" id="GO:0046965">
    <property type="term" value="F:nuclear retinoid X receptor binding"/>
    <property type="evidence" value="ECO:0000266"/>
    <property type="project" value="RGD"/>
</dbReference>
<dbReference type="GO" id="GO:0042277">
    <property type="term" value="F:peptide binding"/>
    <property type="evidence" value="ECO:0000314"/>
    <property type="project" value="RGD"/>
</dbReference>
<dbReference type="GO" id="GO:0044877">
    <property type="term" value="F:protein-containing complex binding"/>
    <property type="evidence" value="ECO:0000314"/>
    <property type="project" value="RGD"/>
</dbReference>
<dbReference type="GO" id="GO:0000978">
    <property type="term" value="F:RNA polymerase II cis-regulatory region sequence-specific DNA binding"/>
    <property type="evidence" value="ECO:0000314"/>
    <property type="project" value="NTNU_SB"/>
</dbReference>
<dbReference type="GO" id="GO:0000977">
    <property type="term" value="F:RNA polymerase II transcription regulatory region sequence-specific DNA binding"/>
    <property type="evidence" value="ECO:0000266"/>
    <property type="project" value="RGD"/>
</dbReference>
<dbReference type="GO" id="GO:0043565">
    <property type="term" value="F:sequence-specific DNA binding"/>
    <property type="evidence" value="ECO:0000266"/>
    <property type="project" value="RGD"/>
</dbReference>
<dbReference type="GO" id="GO:0001221">
    <property type="term" value="F:transcription coregulator binding"/>
    <property type="evidence" value="ECO:0000266"/>
    <property type="project" value="RGD"/>
</dbReference>
<dbReference type="GO" id="GO:0008270">
    <property type="term" value="F:zinc ion binding"/>
    <property type="evidence" value="ECO:0007669"/>
    <property type="project" value="UniProtKB-KW"/>
</dbReference>
<dbReference type="GO" id="GO:0015721">
    <property type="term" value="P:bile acid and bile salt transport"/>
    <property type="evidence" value="ECO:0000270"/>
    <property type="project" value="RGD"/>
</dbReference>
<dbReference type="GO" id="GO:0008206">
    <property type="term" value="P:bile acid metabolic process"/>
    <property type="evidence" value="ECO:0000314"/>
    <property type="project" value="RGD"/>
</dbReference>
<dbReference type="GO" id="GO:0030154">
    <property type="term" value="P:cell differentiation"/>
    <property type="evidence" value="ECO:0000318"/>
    <property type="project" value="GO_Central"/>
</dbReference>
<dbReference type="GO" id="GO:0007043">
    <property type="term" value="P:cell-cell junction assembly"/>
    <property type="evidence" value="ECO:0000266"/>
    <property type="project" value="RGD"/>
</dbReference>
<dbReference type="GO" id="GO:1903413">
    <property type="term" value="P:cellular response to bile acid"/>
    <property type="evidence" value="ECO:0000314"/>
    <property type="project" value="UniProtKB"/>
</dbReference>
<dbReference type="GO" id="GO:0071398">
    <property type="term" value="P:cellular response to fatty acid"/>
    <property type="evidence" value="ECO:0000266"/>
    <property type="project" value="RGD"/>
</dbReference>
<dbReference type="GO" id="GO:0071222">
    <property type="term" value="P:cellular response to lipopolysaccharide"/>
    <property type="evidence" value="ECO:0000266"/>
    <property type="project" value="RGD"/>
</dbReference>
<dbReference type="GO" id="GO:0071466">
    <property type="term" value="P:cellular response to xenobiotic stimulus"/>
    <property type="evidence" value="ECO:0000314"/>
    <property type="project" value="RGD"/>
</dbReference>
<dbReference type="GO" id="GO:0042632">
    <property type="term" value="P:cholesterol homeostasis"/>
    <property type="evidence" value="ECO:0000314"/>
    <property type="project" value="RGD"/>
</dbReference>
<dbReference type="GO" id="GO:0042742">
    <property type="term" value="P:defense response to bacterium"/>
    <property type="evidence" value="ECO:0000266"/>
    <property type="project" value="RGD"/>
</dbReference>
<dbReference type="GO" id="GO:0048565">
    <property type="term" value="P:digestive tract development"/>
    <property type="evidence" value="ECO:0000270"/>
    <property type="project" value="RGD"/>
</dbReference>
<dbReference type="GO" id="GO:0055089">
    <property type="term" value="P:fatty acid homeostasis"/>
    <property type="evidence" value="ECO:0000266"/>
    <property type="project" value="RGD"/>
</dbReference>
<dbReference type="GO" id="GO:0042593">
    <property type="term" value="P:glucose homeostasis"/>
    <property type="evidence" value="ECO:0000266"/>
    <property type="project" value="RGD"/>
</dbReference>
<dbReference type="GO" id="GO:0006954">
    <property type="term" value="P:inflammatory response"/>
    <property type="evidence" value="ECO:0007669"/>
    <property type="project" value="UniProtKB-KW"/>
</dbReference>
<dbReference type="GO" id="GO:0045087">
    <property type="term" value="P:innate immune response"/>
    <property type="evidence" value="ECO:0007669"/>
    <property type="project" value="UniProtKB-KW"/>
</dbReference>
<dbReference type="GO" id="GO:0001678">
    <property type="term" value="P:intracellular glucose homeostasis"/>
    <property type="evidence" value="ECO:0000266"/>
    <property type="project" value="RGD"/>
</dbReference>
<dbReference type="GO" id="GO:0030522">
    <property type="term" value="P:intracellular receptor signaling pathway"/>
    <property type="evidence" value="ECO:0000318"/>
    <property type="project" value="GO_Central"/>
</dbReference>
<dbReference type="GO" id="GO:0035356">
    <property type="term" value="P:intracellular triglyceride homeostasis"/>
    <property type="evidence" value="ECO:0000266"/>
    <property type="project" value="RGD"/>
</dbReference>
<dbReference type="GO" id="GO:0043066">
    <property type="term" value="P:negative regulation of apoptotic process"/>
    <property type="evidence" value="ECO:0000266"/>
    <property type="project" value="RGD"/>
</dbReference>
<dbReference type="GO" id="GO:0043124">
    <property type="term" value="P:negative regulation of canonical NF-kappaB signal transduction"/>
    <property type="evidence" value="ECO:0000266"/>
    <property type="project" value="RGD"/>
</dbReference>
<dbReference type="GO" id="GO:0032966">
    <property type="term" value="P:negative regulation of collagen biosynthetic process"/>
    <property type="evidence" value="ECO:0000315"/>
    <property type="project" value="RGD"/>
</dbReference>
<dbReference type="GO" id="GO:0050728">
    <property type="term" value="P:negative regulation of inflammatory response"/>
    <property type="evidence" value="ECO:0000266"/>
    <property type="project" value="RGD"/>
</dbReference>
<dbReference type="GO" id="GO:0032692">
    <property type="term" value="P:negative regulation of interleukin-1 production"/>
    <property type="evidence" value="ECO:0000266"/>
    <property type="project" value="RGD"/>
</dbReference>
<dbReference type="GO" id="GO:0032703">
    <property type="term" value="P:negative regulation of interleukin-2 production"/>
    <property type="evidence" value="ECO:0000266"/>
    <property type="project" value="RGD"/>
</dbReference>
<dbReference type="GO" id="GO:0032715">
    <property type="term" value="P:negative regulation of interleukin-6 production"/>
    <property type="evidence" value="ECO:0000266"/>
    <property type="project" value="RGD"/>
</dbReference>
<dbReference type="GO" id="GO:0071638">
    <property type="term" value="P:negative regulation of monocyte chemotactic protein-1 production"/>
    <property type="evidence" value="ECO:0000266"/>
    <property type="project" value="RGD"/>
</dbReference>
<dbReference type="GO" id="GO:0000122">
    <property type="term" value="P:negative regulation of transcription by RNA polymerase II"/>
    <property type="evidence" value="ECO:0000315"/>
    <property type="project" value="RGD"/>
</dbReference>
<dbReference type="GO" id="GO:0010868">
    <property type="term" value="P:negative regulation of triglyceride biosynthetic process"/>
    <property type="evidence" value="ECO:0000315"/>
    <property type="project" value="RGD"/>
</dbReference>
<dbReference type="GO" id="GO:0032720">
    <property type="term" value="P:negative regulation of tumor necrosis factor production"/>
    <property type="evidence" value="ECO:0000266"/>
    <property type="project" value="RGD"/>
</dbReference>
<dbReference type="GO" id="GO:0010804">
    <property type="term" value="P:negative regulation of tumor necrosis factor-mediated signaling pathway"/>
    <property type="evidence" value="ECO:0000266"/>
    <property type="project" value="RGD"/>
</dbReference>
<dbReference type="GO" id="GO:0032689">
    <property type="term" value="P:negative regulation of type II interferon production"/>
    <property type="evidence" value="ECO:0000266"/>
    <property type="project" value="RGD"/>
</dbReference>
<dbReference type="GO" id="GO:0010903">
    <property type="term" value="P:negative regulation of very-low-density lipoprotein particle remodeling"/>
    <property type="evidence" value="ECO:0000266"/>
    <property type="project" value="RGD"/>
</dbReference>
<dbReference type="GO" id="GO:0007219">
    <property type="term" value="P:Notch signaling pathway"/>
    <property type="evidence" value="ECO:0000266"/>
    <property type="project" value="RGD"/>
</dbReference>
<dbReference type="GO" id="GO:0038185">
    <property type="term" value="P:nuclear receptor-mediated bile acid signaling pathway"/>
    <property type="evidence" value="ECO:0000314"/>
    <property type="project" value="UniProtKB"/>
</dbReference>
<dbReference type="GO" id="GO:1904179">
    <property type="term" value="P:positive regulation of adipose tissue development"/>
    <property type="evidence" value="ECO:0000266"/>
    <property type="project" value="RGD"/>
</dbReference>
<dbReference type="GO" id="GO:2001250">
    <property type="term" value="P:positive regulation of ammonia assimilation cycle"/>
    <property type="evidence" value="ECO:0000266"/>
    <property type="project" value="RGD"/>
</dbReference>
<dbReference type="GO" id="GO:0045893">
    <property type="term" value="P:positive regulation of DNA-templated transcription"/>
    <property type="evidence" value="ECO:0000266"/>
    <property type="project" value="RGD"/>
</dbReference>
<dbReference type="GO" id="GO:0010628">
    <property type="term" value="P:positive regulation of gene expression"/>
    <property type="evidence" value="ECO:0000315"/>
    <property type="project" value="RGD"/>
</dbReference>
<dbReference type="GO" id="GO:2000213">
    <property type="term" value="P:positive regulation of glutamate metabolic process"/>
    <property type="evidence" value="ECO:0000266"/>
    <property type="project" value="RGD"/>
</dbReference>
<dbReference type="GO" id="GO:0046628">
    <property type="term" value="P:positive regulation of insulin receptor signaling pathway"/>
    <property type="evidence" value="ECO:0000266"/>
    <property type="project" value="RGD"/>
</dbReference>
<dbReference type="GO" id="GO:0035774">
    <property type="term" value="P:positive regulation of insulin secretion involved in cellular response to glucose stimulus"/>
    <property type="evidence" value="ECO:0000266"/>
    <property type="project" value="RGD"/>
</dbReference>
<dbReference type="GO" id="GO:0032740">
    <property type="term" value="P:positive regulation of interleukin-17 production"/>
    <property type="evidence" value="ECO:0000266"/>
    <property type="project" value="RGD"/>
</dbReference>
<dbReference type="GO" id="GO:1905695">
    <property type="term" value="P:positive regulation of phosphatidic acid biosynthetic process"/>
    <property type="evidence" value="ECO:0000266"/>
    <property type="project" value="RGD"/>
</dbReference>
<dbReference type="GO" id="GO:0045944">
    <property type="term" value="P:positive regulation of transcription by RNA polymerase II"/>
    <property type="evidence" value="ECO:0000314"/>
    <property type="project" value="NTNU_SB"/>
</dbReference>
<dbReference type="GO" id="GO:0006109">
    <property type="term" value="P:regulation of carbohydrate metabolic process"/>
    <property type="evidence" value="ECO:0000315"/>
    <property type="project" value="RGD"/>
</dbReference>
<dbReference type="GO" id="GO:0061178">
    <property type="term" value="P:regulation of insulin secretion involved in cellular response to glucose stimulus"/>
    <property type="evidence" value="ECO:0000266"/>
    <property type="project" value="RGD"/>
</dbReference>
<dbReference type="GO" id="GO:0010988">
    <property type="term" value="P:regulation of low-density lipoprotein particle clearance"/>
    <property type="evidence" value="ECO:0000266"/>
    <property type="project" value="RGD"/>
</dbReference>
<dbReference type="GO" id="GO:0006357">
    <property type="term" value="P:regulation of transcription by RNA polymerase II"/>
    <property type="evidence" value="ECO:0000314"/>
    <property type="project" value="UniProtKB"/>
</dbReference>
<dbReference type="GO" id="GO:0034255">
    <property type="term" value="P:regulation of urea metabolic process"/>
    <property type="evidence" value="ECO:0000266"/>
    <property type="project" value="RGD"/>
</dbReference>
<dbReference type="GO" id="GO:0070723">
    <property type="term" value="P:response to cholesterol"/>
    <property type="evidence" value="ECO:0000270"/>
    <property type="project" value="RGD"/>
</dbReference>
<dbReference type="GO" id="GO:0043627">
    <property type="term" value="P:response to estrogen"/>
    <property type="evidence" value="ECO:0000270"/>
    <property type="project" value="RGD"/>
</dbReference>
<dbReference type="GO" id="GO:0045471">
    <property type="term" value="P:response to ethanol"/>
    <property type="evidence" value="ECO:0000270"/>
    <property type="project" value="RGD"/>
</dbReference>
<dbReference type="GO" id="GO:0009749">
    <property type="term" value="P:response to glucose"/>
    <property type="evidence" value="ECO:0000270"/>
    <property type="project" value="RGD"/>
</dbReference>
<dbReference type="GO" id="GO:0032496">
    <property type="term" value="P:response to lipopolysaccharide"/>
    <property type="evidence" value="ECO:0000270"/>
    <property type="project" value="RGD"/>
</dbReference>
<dbReference type="GO" id="GO:0071873">
    <property type="term" value="P:response to norepinephrine"/>
    <property type="evidence" value="ECO:0000315"/>
    <property type="project" value="RGD"/>
</dbReference>
<dbReference type="GO" id="GO:0031667">
    <property type="term" value="P:response to nutrient levels"/>
    <property type="evidence" value="ECO:0000270"/>
    <property type="project" value="RGD"/>
</dbReference>
<dbReference type="GO" id="GO:0009410">
    <property type="term" value="P:response to xenobiotic stimulus"/>
    <property type="evidence" value="ECO:0000270"/>
    <property type="project" value="RGD"/>
</dbReference>
<dbReference type="GO" id="GO:0034162">
    <property type="term" value="P:toll-like receptor 9 signaling pathway"/>
    <property type="evidence" value="ECO:0000266"/>
    <property type="project" value="RGD"/>
</dbReference>
<dbReference type="GO" id="GO:0006366">
    <property type="term" value="P:transcription by RNA polymerase II"/>
    <property type="evidence" value="ECO:0000266"/>
    <property type="project" value="RGD"/>
</dbReference>
<dbReference type="GO" id="GO:0070328">
    <property type="term" value="P:triglyceride homeostasis"/>
    <property type="evidence" value="ECO:0000314"/>
    <property type="project" value="RGD"/>
</dbReference>
<dbReference type="CDD" id="cd06962">
    <property type="entry name" value="NR_DBD_FXR"/>
    <property type="match status" value="1"/>
</dbReference>
<dbReference type="CDD" id="cd06936">
    <property type="entry name" value="NR_LBD_Fxr"/>
    <property type="match status" value="1"/>
</dbReference>
<dbReference type="FunFam" id="1.10.565.10:FF:000018">
    <property type="entry name" value="Bile acid receptor isoform 4"/>
    <property type="match status" value="1"/>
</dbReference>
<dbReference type="FunFam" id="3.30.50.10:FF:000021">
    <property type="entry name" value="bile acid receptor isoform X2"/>
    <property type="match status" value="1"/>
</dbReference>
<dbReference type="Gene3D" id="3.30.50.10">
    <property type="entry name" value="Erythroid Transcription Factor GATA-1, subunit A"/>
    <property type="match status" value="1"/>
</dbReference>
<dbReference type="Gene3D" id="1.10.565.10">
    <property type="entry name" value="Retinoid X Receptor"/>
    <property type="match status" value="1"/>
</dbReference>
<dbReference type="InterPro" id="IPR035500">
    <property type="entry name" value="NHR-like_dom_sf"/>
</dbReference>
<dbReference type="InterPro" id="IPR044114">
    <property type="entry name" value="NR_LBD_NR1H4"/>
</dbReference>
<dbReference type="InterPro" id="IPR000536">
    <property type="entry name" value="Nucl_hrmn_rcpt_lig-bd"/>
</dbReference>
<dbReference type="InterPro" id="IPR050234">
    <property type="entry name" value="Nuclear_hormone_rcpt_NR1"/>
</dbReference>
<dbReference type="InterPro" id="IPR001723">
    <property type="entry name" value="Nuclear_hrmn_rcpt"/>
</dbReference>
<dbReference type="InterPro" id="IPR001728">
    <property type="entry name" value="ThyrH_rcpt"/>
</dbReference>
<dbReference type="InterPro" id="IPR001628">
    <property type="entry name" value="Znf_hrmn_rcpt"/>
</dbReference>
<dbReference type="InterPro" id="IPR013088">
    <property type="entry name" value="Znf_NHR/GATA"/>
</dbReference>
<dbReference type="PANTHER" id="PTHR24082:SF155">
    <property type="entry name" value="BILE ACID RECEPTOR"/>
    <property type="match status" value="1"/>
</dbReference>
<dbReference type="PANTHER" id="PTHR24082">
    <property type="entry name" value="NUCLEAR HORMONE RECEPTOR"/>
    <property type="match status" value="1"/>
</dbReference>
<dbReference type="Pfam" id="PF00104">
    <property type="entry name" value="Hormone_recep"/>
    <property type="match status" value="1"/>
</dbReference>
<dbReference type="Pfam" id="PF00105">
    <property type="entry name" value="zf-C4"/>
    <property type="match status" value="1"/>
</dbReference>
<dbReference type="PRINTS" id="PR00398">
    <property type="entry name" value="STRDHORMONER"/>
</dbReference>
<dbReference type="PRINTS" id="PR00047">
    <property type="entry name" value="STROIDFINGER"/>
</dbReference>
<dbReference type="PRINTS" id="PR00546">
    <property type="entry name" value="THYROIDHORMR"/>
</dbReference>
<dbReference type="SMART" id="SM00430">
    <property type="entry name" value="HOLI"/>
    <property type="match status" value="1"/>
</dbReference>
<dbReference type="SMART" id="SM00399">
    <property type="entry name" value="ZnF_C4"/>
    <property type="match status" value="1"/>
</dbReference>
<dbReference type="SUPFAM" id="SSF57716">
    <property type="entry name" value="Glucocorticoid receptor-like (DNA-binding domain)"/>
    <property type="match status" value="1"/>
</dbReference>
<dbReference type="SUPFAM" id="SSF48508">
    <property type="entry name" value="Nuclear receptor ligand-binding domain"/>
    <property type="match status" value="1"/>
</dbReference>
<dbReference type="PROSITE" id="PS51843">
    <property type="entry name" value="NR_LBD"/>
    <property type="match status" value="1"/>
</dbReference>
<dbReference type="PROSITE" id="PS00031">
    <property type="entry name" value="NUCLEAR_REC_DBD_1"/>
    <property type="match status" value="1"/>
</dbReference>
<dbReference type="PROSITE" id="PS51030">
    <property type="entry name" value="NUCLEAR_REC_DBD_2"/>
    <property type="match status" value="1"/>
</dbReference>
<sequence length="469" mass="53935">MNLIGPSHLQATDEFALSENLFGVLTEHAAGPLGQNLDLESYSPYNNVQFPQVQPQISSSSYYSNLGFYPQQPEDWYSPGLYELRRMPTESVYQGETEVSEMPVTKKPRMAASSAGRIKGDELCVVCGDRASGYHYNALTCEGCKGFFRRSITKNAVYKCKNGGNCVMDMYMRRKCQDCRLRKCREMGMLAECLLTEIQCKSKRLRKNVKQHADQTVNEDSEGRDLRQVTSTTKLCREKTELTVDQQTLLDYIMDSYSKQRMPQEITNKILKEEFSAEENFLILTEMATSHVQILVEFTKRLPGFQTLDHEDQIALLKGSAVEAMFLRSAEIFNKKLPAGHADLLEERIRKSGISDEYITPMFSFYKSVGELKMTQEEYALLTAIVILSPDRQYIKDREAVEKLQEPLLDVLQKLCKIYQPENPQHFACLLGRLTELRTFNHHHAEMLMSWRVNDHKFTPLLCEIWDVQ</sequence>
<gene>
    <name type="primary">Nr1h4</name>
    <name type="synonym">Bar</name>
    <name type="synonym">Fxr</name>
    <name type="synonym">Rip14</name>
</gene>
<evidence type="ECO:0000250" key="1">
    <source>
        <dbReference type="UniProtKB" id="Q60641"/>
    </source>
</evidence>
<evidence type="ECO:0000250" key="2">
    <source>
        <dbReference type="UniProtKB" id="Q96RI1"/>
    </source>
</evidence>
<evidence type="ECO:0000255" key="3">
    <source>
        <dbReference type="PROSITE-ProRule" id="PRU00407"/>
    </source>
</evidence>
<evidence type="ECO:0000255" key="4">
    <source>
        <dbReference type="PROSITE-ProRule" id="PRU01189"/>
    </source>
</evidence>
<evidence type="ECO:0000269" key="5">
    <source>
    </source>
</evidence>
<evidence type="ECO:0000269" key="6">
    <source>
    </source>
</evidence>
<evidence type="ECO:0000269" key="7">
    <source>
    </source>
</evidence>
<evidence type="ECO:0000269" key="8">
    <source>
    </source>
</evidence>
<evidence type="ECO:0000269" key="9">
    <source>
    </source>
</evidence>
<evidence type="ECO:0000305" key="10"/>
<evidence type="ECO:0000305" key="11">
    <source>
    </source>
</evidence>
<evidence type="ECO:0007744" key="12">
    <source>
        <dbReference type="PDB" id="1OSV"/>
    </source>
</evidence>
<evidence type="ECO:0007744" key="13">
    <source>
        <dbReference type="PDB" id="1OT7"/>
    </source>
</evidence>
<evidence type="ECO:0007829" key="14">
    <source>
        <dbReference type="PDB" id="1OSV"/>
    </source>
</evidence>
<comment type="function">
    <text evidence="1 2 5 8">Ligand-activated transcription factor. Receptor for bile acids (BAs) such as chenodeoxycholic acid (CDCA), lithocholic acid, deoxycholic acid (DCA) and allocholic acid (ACA). Plays a essential role in BA homeostasis through the regulation of genes involved in BA synthesis, conjugation and enterohepatic circulation. Also regulates lipid and glucose homeostasis and is involved innate immune response. The FXR-RXR heterodimer binds predominantly to farnesoid X receptor response elements (FXREs) containing two inverted repeats of the consensus sequence 5'-AGGTCA-3' in which the monomers are spaced by 1 nucleotide (IR-1) but also to tandem repeat DR1 sites with lower affinity, and can be activated by either FXR or RXR-specific ligands. It is proposed that monomeric nuclear receptors such as NR5A2/LRH-1 bound to coregulatory nuclear responsive element (NRE) halfsites located in close proximity to FXREs modulate transcriptional activity. In the liver activates transcription of the corepressor NR0B2 thereby indirectly inhibiting CYP7A1 and CYP8B1 (involved in BA synthesis) implicating at least in part histone demethylase KDM1A resulting in epigenomic repression, and SLC10A1/NTCP (involved in hepatic uptake of conjugated BAs). Activates transcription of the repressor MAFG (involved in regulation of BA synthesis). Activates transcription of SLC27A5/BACS and BAAT (involved in BA conjugation), ABCB11/BSEP (involved in bile salt export) by directly recruiting histone methyltransferase CARM1, and ABCC2/MRP2 (involved in secretion of conjugated BAs) and ABCB4 (involved in secretion of phosphatidylcholine in the small intestine). Activates transcription of SLC27A5/BACS and BAAT (involved in BA conjugation), ABCB11/BSEP (involved in bile salt export) by directly recruiting histone methyltransferase CARM1, and ABCC2/MRP2 (involved in secretion of conjugated BAs) and ABCB4 (involved in secretion of phosphatidylcholine in the small intestine). In the intestine activates FGF19 expression and secretion leading to hepatic CYP7A1 repression. The function also involves the coordinated induction of hepatic KLB/beta-klotho expression. Regulates transcription of liver UGT2B4 and SULT2A1 involved in BA detoxification; binding to the UGT2B4 promoter seems to imply a monomeric transactivation independent of RXRA. Modulates lipid homeostasis by activating liver NR0B2/SHP-mediated repression of SREBF1 (involved in de novo lipogenesis), expression of PLTP (involved in HDL formation), SCARB1 (involved in HDL hepatic uptake), APOE, APOC1, APOC4, PPARA (involved in beta-oxidation of fatty acids), VLDLR and SDC1 (involved in the hepatic uptake of LDL and IDL remnants), and inhibiting expression of MTTP (involved in VLDL assembly). Increases expression of APOC2 (promoting lipoprotein lipase activity implicated in triglyceride clearance). Transrepresses APOA1 involving a monomeric competition with NR2A1 for binding to a DR1 element. Also reduces triglyceride clearance by inhibiting expression of ANGPTL3 and APOC3 (both involved in inhibition of lipoprotein lipase). Involved in glucose homeostasis by modulating hepatic gluconeogenesis through activation of NR0B2/SHP-mediated repression of respective genes. Modulates glycogen synthesis (inducing phosphorylation of glycogen synthase kinase-3). Modulates glucose-stimulated insulin secretion and is involved in insulin resistance. Involved in intestinal innate immunity. Plays a role in protecting the distal small intestine against bacterial overgrowth and preservation of the epithelial barrier. Down-regulates inflammatory cytokine expression in several types of immune cells including macrophages and mononuclear cells. Mediates trans-repression of TLR4-induced cytokine expression; the function seems to require its sumoylation and prevents N-CoR nuclear receptor corepressor clearance from target genes such as IL1B and NOS2. Involved in the TLR9-mediated protective mechanism in intestinal inflammation. Plays an anti-inflammatory role in liver inflammation; proposed to inhibit pro-inflammatory (but not antiapoptotic) NF-kappa-B signaling.</text>
</comment>
<comment type="subunit">
    <text evidence="1 2 7 9">Heterodimer with RXRA; the heterodimerization enhances the binding affinity for LXXLL motifs from coactivators (By similarity). Binds DNA predominantly as a heterodimer with RXRA. After activation by agonist binding interacts with coactivators. Interacts with NCOA1, NCOA2, PPARGC1A, CARM1, SETD7, PRMT1, GPS2, SMARCA4 and MED1, EP300 and SMARCD1. Interacts with XRCC5 and XRCC6; decreasing NR1H4/FXR transactivation activity towards ABCB11/BSEP. Interacts with PAGR1 AND NCOA6; indicative for an association with an MLL2/MLL3 complex (ASCOM).</text>
</comment>
<comment type="subcellular location">
    <subcellularLocation>
        <location evidence="1 2 10">Nucleus</location>
    </subcellularLocation>
</comment>
<comment type="induction">
    <text evidence="9">Heterodimer of NR1H4 and RXR activated by farnesol.</text>
</comment>
<comment type="PTM">
    <text evidence="2">Acetylated by EP300. Lys-210 as is the major acetylation site for EP300; the dynamicly regulated acetylation inhibits heterodimerization with RXRA and transactivation activity. Deacetylated by SIRT1.</text>
</comment>
<comment type="PTM">
    <text evidence="2">Methylation may increase transactivation of target genes.</text>
</comment>
<comment type="PTM">
    <text evidence="2">Phosphorylation by PKC/PRKCA increases transactivation activity by promoting association with PPARGC1A.</text>
</comment>
<comment type="PTM">
    <text evidence="2">Sumoylated upon ligand binding.</text>
</comment>
<comment type="similarity">
    <text evidence="10">Belongs to the nuclear hormone receptor family. NR1 subfamily.</text>
</comment>
<reference key="1">
    <citation type="journal article" date="1995" name="Cell">
        <title>Identification of a nuclear receptor that is activated by farnesol metabolites.</title>
        <authorList>
            <person name="Forman B.M."/>
            <person name="Goode E."/>
            <person name="Chen J."/>
            <person name="Oro A.E."/>
            <person name="Bradley D.J."/>
            <person name="Perlmann T."/>
            <person name="Noonan D.J."/>
            <person name="Burka L.T."/>
            <person name="McMorris T."/>
            <person name="Lamph W.W."/>
            <person name="Evans R.M."/>
            <person name="Weinberger C."/>
        </authorList>
    </citation>
    <scope>NUCLEOTIDE SEQUENCE [MRNA]</scope>
    <scope>INTERACTION WITH RXRA</scope>
    <scope>INDUCTION</scope>
    <source>
        <strain>Lewis</strain>
        <tissue>Liver</tissue>
    </source>
</reference>
<reference key="2">
    <citation type="journal article" date="2000" name="J. Biol. Chem.">
        <title>Identification of the DNA binding specificity and potential target genes for the farnesoid X-activated receptor.</title>
        <authorList>
            <person name="Laffitte B.A."/>
            <person name="Kast H.R."/>
            <person name="Nguyen C.M."/>
            <person name="Zavacki A.M."/>
            <person name="Moore D.D."/>
            <person name="Edwards P.A."/>
        </authorList>
    </citation>
    <scope>DNA-BINDING</scope>
</reference>
<reference key="3">
    <citation type="journal article" date="2003" name="Mol. Cell. Biol.">
        <title>BAF60a mediates critical interactions between nuclear receptors and the BRG1 chromatin-remodeling complex for transactivation.</title>
        <authorList>
            <person name="Hsiao P.W."/>
            <person name="Fryer C.J."/>
            <person name="Trotter K.W."/>
            <person name="Wang W."/>
            <person name="Archer T.K."/>
        </authorList>
    </citation>
    <scope>INTERACTION WITH SMARCD1</scope>
</reference>
<reference key="4">
    <citation type="journal article" date="2010" name="J. Lipid Res.">
        <title>Bile acids regulate hepatic gluconeogenic genes and farnesoid X receptor via G(alpha)i-protein-coupled receptors and the AKT pathway.</title>
        <authorList>
            <person name="Cao R."/>
            <person name="Cronk Z.X."/>
            <person name="Zha W."/>
            <person name="Sun L."/>
            <person name="Wang X."/>
            <person name="Fang Y."/>
            <person name="Studer E."/>
            <person name="Zhou H."/>
            <person name="Pandak W.M."/>
            <person name="Dent P."/>
            <person name="Gil G."/>
            <person name="Hylemon P.B."/>
        </authorList>
    </citation>
    <scope>FUNCTION IN GLUCOSE HOMEOSTASIS</scope>
</reference>
<reference evidence="12 13" key="5">
    <citation type="journal article" date="2003" name="Mol. Cell">
        <title>Structural basis for bile acid binding and activation of the nuclear receptor FXR.</title>
        <authorList>
            <person name="Mi L.Z."/>
            <person name="Devarakonda S."/>
            <person name="Harp J.M."/>
            <person name="Han Q."/>
            <person name="Pellicciari R."/>
            <person name="Willson T.M."/>
            <person name="Khorasanizadeh S."/>
            <person name="Rastinejad F."/>
        </authorList>
    </citation>
    <scope>X-RAY CRYSTALLOGRAPHY (2.5 ANGSTROMS) OF 241-469 IN COMPLEXES WITH CHENODEOXYCHOLIC ACID ANALOGS AND NCOA2 COACTIVATOR PEPTIDE</scope>
</reference>
<organism>
    <name type="scientific">Rattus norvegicus</name>
    <name type="common">Rat</name>
    <dbReference type="NCBI Taxonomy" id="10116"/>
    <lineage>
        <taxon>Eukaryota</taxon>
        <taxon>Metazoa</taxon>
        <taxon>Chordata</taxon>
        <taxon>Craniata</taxon>
        <taxon>Vertebrata</taxon>
        <taxon>Euteleostomi</taxon>
        <taxon>Mammalia</taxon>
        <taxon>Eutheria</taxon>
        <taxon>Euarchontoglires</taxon>
        <taxon>Glires</taxon>
        <taxon>Rodentia</taxon>
        <taxon>Myomorpha</taxon>
        <taxon>Muroidea</taxon>
        <taxon>Muridae</taxon>
        <taxon>Murinae</taxon>
        <taxon>Rattus</taxon>
    </lineage>
</organism>
<proteinExistence type="evidence at protein level"/>
<feature type="chain" id="PRO_0000053540" description="Bile acid receptor">
    <location>
        <begin position="1"/>
        <end position="469"/>
    </location>
</feature>
<feature type="domain" description="NR LBD" evidence="4">
    <location>
        <begin position="245"/>
        <end position="469"/>
    </location>
</feature>
<feature type="DNA-binding region" description="Nuclear receptor" evidence="3">
    <location>
        <begin position="121"/>
        <end position="196"/>
    </location>
</feature>
<feature type="zinc finger region" description="NR C4-type" evidence="3">
    <location>
        <begin position="124"/>
        <end position="144"/>
    </location>
</feature>
<feature type="zinc finger region" description="NR C4-type" evidence="3">
    <location>
        <begin position="160"/>
        <end position="184"/>
    </location>
</feature>
<feature type="binding site" evidence="6 13">
    <location>
        <position position="328"/>
    </location>
    <ligand>
        <name>3beta,7beta-dihydroxy-5beta-cholan-24-oate</name>
        <dbReference type="ChEBI" id="CHEBI:78602"/>
        <note>agonist</note>
    </ligand>
</feature>
<feature type="binding site" evidence="11 12 13">
    <location>
        <position position="328"/>
    </location>
    <ligand>
        <name>chenodeoxycholate</name>
        <dbReference type="ChEBI" id="CHEBI:36234"/>
        <note>agonist</note>
    </ligand>
</feature>
<feature type="binding site" evidence="11 12 13">
    <location>
        <position position="358"/>
    </location>
    <ligand>
        <name>chenodeoxycholate</name>
        <dbReference type="ChEBI" id="CHEBI:36234"/>
        <note>agonist</note>
    </ligand>
</feature>
<feature type="binding site" evidence="6 13">
    <location>
        <position position="366"/>
    </location>
    <ligand>
        <name>3beta,7beta-dihydroxy-5beta-cholan-24-oate</name>
        <dbReference type="ChEBI" id="CHEBI:78602"/>
        <note>agonist</note>
    </ligand>
</feature>
<feature type="binding site" evidence="11 12 13">
    <location>
        <position position="366"/>
    </location>
    <ligand>
        <name>chenodeoxycholate</name>
        <dbReference type="ChEBI" id="CHEBI:36234"/>
        <note>agonist</note>
    </ligand>
</feature>
<feature type="binding site" evidence="11 12">
    <location>
        <position position="444"/>
    </location>
    <ligand>
        <name>chenodeoxycholate</name>
        <dbReference type="ChEBI" id="CHEBI:36234"/>
        <note>agonist</note>
    </ligand>
</feature>
<feature type="modified residue" description="Phosphoserine; by PKC/PRKCA" evidence="2">
    <location>
        <position position="132"/>
    </location>
</feature>
<feature type="modified residue" description="Phosphoserine; by PKC/PRKCA" evidence="2">
    <location>
        <position position="151"/>
    </location>
</feature>
<feature type="modified residue" description="N6-acetyllysine; by EP300" evidence="2">
    <location>
        <position position="154"/>
    </location>
</feature>
<feature type="modified residue" description="N6-methyllysine; by SETD7" evidence="2">
    <location>
        <position position="203"/>
    </location>
</feature>
<feature type="modified residue" description="N6-acetyllysine; by EP300" evidence="2">
    <location>
        <position position="210"/>
    </location>
</feature>
<feature type="modified residue" description="Phosphothreonine; by PKC/PRKCZ" evidence="2">
    <location>
        <position position="439"/>
    </location>
</feature>
<feature type="cross-link" description="Glycyl lysine isopeptide (Lys-Gly) (interchain with G-Cter in SUMO1)" evidence="2">
    <location>
        <position position="119"/>
    </location>
</feature>
<feature type="cross-link" description="Glycyl lysine isopeptide (Lys-Gly) (interchain with G-Cter in SUMO1)" evidence="2">
    <location>
        <position position="272"/>
    </location>
</feature>
<feature type="helix" evidence="14">
    <location>
        <begin position="244"/>
        <end position="257"/>
    </location>
</feature>
<feature type="helix" evidence="14">
    <location>
        <begin position="264"/>
        <end position="268"/>
    </location>
</feature>
<feature type="turn" evidence="14">
    <location>
        <begin position="269"/>
        <end position="271"/>
    </location>
</feature>
<feature type="helix" evidence="14">
    <location>
        <begin position="277"/>
        <end position="300"/>
    </location>
</feature>
<feature type="helix" evidence="14">
    <location>
        <begin position="305"/>
        <end position="307"/>
    </location>
</feature>
<feature type="helix" evidence="14">
    <location>
        <begin position="310"/>
        <end position="333"/>
    </location>
</feature>
<feature type="helix" evidence="14">
    <location>
        <begin position="343"/>
        <end position="349"/>
    </location>
</feature>
<feature type="strand" evidence="14">
    <location>
        <begin position="350"/>
        <end position="353"/>
    </location>
</feature>
<feature type="helix" evidence="14">
    <location>
        <begin position="356"/>
        <end position="371"/>
    </location>
</feature>
<feature type="helix" evidence="14">
    <location>
        <begin position="376"/>
        <end position="387"/>
    </location>
</feature>
<feature type="helix" evidence="14">
    <location>
        <begin position="398"/>
        <end position="419"/>
    </location>
</feature>
<feature type="helix" evidence="14">
    <location>
        <begin position="426"/>
        <end position="448"/>
    </location>
</feature>
<feature type="helix" evidence="14">
    <location>
        <begin position="460"/>
        <end position="465"/>
    </location>
</feature>
<accession>Q62735</accession>
<keyword id="KW-0002">3D-structure</keyword>
<keyword id="KW-0007">Acetylation</keyword>
<keyword id="KW-0010">Activator</keyword>
<keyword id="KW-0238">DNA-binding</keyword>
<keyword id="KW-0391">Immunity</keyword>
<keyword id="KW-0395">Inflammatory response</keyword>
<keyword id="KW-0399">Innate immunity</keyword>
<keyword id="KW-1017">Isopeptide bond</keyword>
<keyword id="KW-0479">Metal-binding</keyword>
<keyword id="KW-0488">Methylation</keyword>
<keyword id="KW-0539">Nucleus</keyword>
<keyword id="KW-0597">Phosphoprotein</keyword>
<keyword id="KW-0675">Receptor</keyword>
<keyword id="KW-1185">Reference proteome</keyword>
<keyword id="KW-0678">Repressor</keyword>
<keyword id="KW-0804">Transcription</keyword>
<keyword id="KW-0805">Transcription regulation</keyword>
<keyword id="KW-0832">Ubl conjugation</keyword>
<keyword id="KW-0862">Zinc</keyword>
<keyword id="KW-0863">Zinc-finger</keyword>
<name>NR1H4_RAT</name>
<protein>
    <recommendedName>
        <fullName>Bile acid receptor</fullName>
    </recommendedName>
    <alternativeName>
        <fullName>Farnesoid X-activated receptor</fullName>
    </alternativeName>
    <alternativeName>
        <fullName>Farnesol receptor HRR-1</fullName>
    </alternativeName>
    <alternativeName>
        <fullName>Nuclear receptor subfamily 1 group H member 4</fullName>
    </alternativeName>
    <alternativeName>
        <fullName>Retinoid X receptor-interacting protein 14</fullName>
        <shortName>RXR-interacting protein 14</shortName>
    </alternativeName>
</protein>